<sequence>MKENMLDILKNLNFTEYESKAYLALLQESPLTGYAVAKKSGVPRSKIYEVLESLVIRGDVFVSHGNTPQYVPVPAKELIKNRRLKAEEHFDQAEKYFEKFEQTANDRENIWNITGRSEILEKVKACILSAKKRILLEIWKEDFKEIEAELKQAAEQGVIVTIIAYGDIVSDFANVYLHDMSSEITEEYDGRWLVYSGDDSEVVAGIVSLGNDSRAAWTMHVGLVMPITEVIIHDLYLMEILKKHRELLEESFGKNLIQLRRKFSIHSDFKKHYLE</sequence>
<dbReference type="EMBL" id="U93874">
    <property type="protein sequence ID" value="AAB80872.1"/>
    <property type="molecule type" value="Genomic_DNA"/>
</dbReference>
<dbReference type="EMBL" id="AL009126">
    <property type="protein sequence ID" value="CAB14653.1"/>
    <property type="molecule type" value="Genomic_DNA"/>
</dbReference>
<dbReference type="PIR" id="E69975">
    <property type="entry name" value="E69975"/>
</dbReference>
<dbReference type="RefSeq" id="NP_390589.1">
    <property type="nucleotide sequence ID" value="NC_000964.3"/>
</dbReference>
<dbReference type="RefSeq" id="WP_004398526.1">
    <property type="nucleotide sequence ID" value="NZ_OZ025638.1"/>
</dbReference>
<dbReference type="SMR" id="O05405"/>
<dbReference type="FunCoup" id="O05405">
    <property type="interactions" value="25"/>
</dbReference>
<dbReference type="STRING" id="224308.BSU27110"/>
<dbReference type="PaxDb" id="224308-BSU27110"/>
<dbReference type="DNASU" id="937224"/>
<dbReference type="EnsemblBacteria" id="CAB14653">
    <property type="protein sequence ID" value="CAB14653"/>
    <property type="gene ID" value="BSU_27110"/>
</dbReference>
<dbReference type="GeneID" id="937224"/>
<dbReference type="KEGG" id="bsu:BSU27110"/>
<dbReference type="PATRIC" id="fig|224308.179.peg.2944"/>
<dbReference type="eggNOG" id="COG1378">
    <property type="taxonomic scope" value="Bacteria"/>
</dbReference>
<dbReference type="InParanoid" id="O05405"/>
<dbReference type="OrthoDB" id="1493540at2"/>
<dbReference type="PhylomeDB" id="O05405"/>
<dbReference type="BioCyc" id="BSUB:BSU27110-MONOMER"/>
<dbReference type="Proteomes" id="UP000001570">
    <property type="component" value="Chromosome"/>
</dbReference>
<dbReference type="CDD" id="cd09124">
    <property type="entry name" value="PLDc_like_TrmB_middle"/>
    <property type="match status" value="1"/>
</dbReference>
<dbReference type="Gene3D" id="3.30.870.10">
    <property type="entry name" value="Endonuclease Chain A"/>
    <property type="match status" value="1"/>
</dbReference>
<dbReference type="Gene3D" id="1.10.10.10">
    <property type="entry name" value="Winged helix-like DNA-binding domain superfamily/Winged helix DNA-binding domain"/>
    <property type="match status" value="1"/>
</dbReference>
<dbReference type="InterPro" id="IPR051797">
    <property type="entry name" value="TrmB-like"/>
</dbReference>
<dbReference type="InterPro" id="IPR021586">
    <property type="entry name" value="Tscrpt_reg_TrmB_C"/>
</dbReference>
<dbReference type="InterPro" id="IPR002831">
    <property type="entry name" value="Tscrpt_reg_TrmB_N"/>
</dbReference>
<dbReference type="InterPro" id="IPR036388">
    <property type="entry name" value="WH-like_DNA-bd_sf"/>
</dbReference>
<dbReference type="InterPro" id="IPR036390">
    <property type="entry name" value="WH_DNA-bd_sf"/>
</dbReference>
<dbReference type="PANTHER" id="PTHR34293">
    <property type="entry name" value="HTH-TYPE TRANSCRIPTIONAL REGULATOR TRMBL2"/>
    <property type="match status" value="1"/>
</dbReference>
<dbReference type="PANTHER" id="PTHR34293:SF1">
    <property type="entry name" value="HTH-TYPE TRANSCRIPTIONAL REGULATOR TRMBL2"/>
    <property type="match status" value="1"/>
</dbReference>
<dbReference type="Pfam" id="PF11495">
    <property type="entry name" value="Regulator_TrmB"/>
    <property type="match status" value="1"/>
</dbReference>
<dbReference type="Pfam" id="PF01978">
    <property type="entry name" value="TrmB"/>
    <property type="match status" value="1"/>
</dbReference>
<dbReference type="SUPFAM" id="SSF56024">
    <property type="entry name" value="Phospholipase D/nuclease"/>
    <property type="match status" value="1"/>
</dbReference>
<dbReference type="SUPFAM" id="SSF46785">
    <property type="entry name" value="Winged helix' DNA-binding domain"/>
    <property type="match status" value="1"/>
</dbReference>
<feature type="chain" id="PRO_0000360569" description="Uncharacterized protein YrhO">
    <location>
        <begin position="1"/>
        <end position="275"/>
    </location>
</feature>
<feature type="coiled-coil region" evidence="1">
    <location>
        <begin position="75"/>
        <end position="157"/>
    </location>
</feature>
<gene>
    <name type="primary">yrhO</name>
    <name type="ordered locus">BSU27110</name>
</gene>
<name>YRHO_BACSU</name>
<organism>
    <name type="scientific">Bacillus subtilis (strain 168)</name>
    <dbReference type="NCBI Taxonomy" id="224308"/>
    <lineage>
        <taxon>Bacteria</taxon>
        <taxon>Bacillati</taxon>
        <taxon>Bacillota</taxon>
        <taxon>Bacilli</taxon>
        <taxon>Bacillales</taxon>
        <taxon>Bacillaceae</taxon>
        <taxon>Bacillus</taxon>
    </lineage>
</organism>
<accession>O05405</accession>
<accession>Q795Y9</accession>
<evidence type="ECO:0000255" key="1"/>
<reference key="1">
    <citation type="journal article" date="1997" name="Microbiology">
        <title>Sequence of the Bacillus subtilis genome region in the vicinity of the lev operon reveals two new extracytoplasmic function RNA polymerase sigma factors SigV and SigZ.</title>
        <authorList>
            <person name="Sorokin A."/>
            <person name="Bolotin A."/>
            <person name="Purnelle B."/>
            <person name="Hilbert H."/>
            <person name="Lauber J."/>
            <person name="Duesterhoeft A."/>
            <person name="Ehrlich S.D."/>
        </authorList>
    </citation>
    <scope>NUCLEOTIDE SEQUENCE [GENOMIC DNA]</scope>
    <source>
        <strain>168</strain>
    </source>
</reference>
<reference key="2">
    <citation type="journal article" date="1997" name="Nature">
        <title>The complete genome sequence of the Gram-positive bacterium Bacillus subtilis.</title>
        <authorList>
            <person name="Kunst F."/>
            <person name="Ogasawara N."/>
            <person name="Moszer I."/>
            <person name="Albertini A.M."/>
            <person name="Alloni G."/>
            <person name="Azevedo V."/>
            <person name="Bertero M.G."/>
            <person name="Bessieres P."/>
            <person name="Bolotin A."/>
            <person name="Borchert S."/>
            <person name="Borriss R."/>
            <person name="Boursier L."/>
            <person name="Brans A."/>
            <person name="Braun M."/>
            <person name="Brignell S.C."/>
            <person name="Bron S."/>
            <person name="Brouillet S."/>
            <person name="Bruschi C.V."/>
            <person name="Caldwell B."/>
            <person name="Capuano V."/>
            <person name="Carter N.M."/>
            <person name="Choi S.-K."/>
            <person name="Codani J.-J."/>
            <person name="Connerton I.F."/>
            <person name="Cummings N.J."/>
            <person name="Daniel R.A."/>
            <person name="Denizot F."/>
            <person name="Devine K.M."/>
            <person name="Duesterhoeft A."/>
            <person name="Ehrlich S.D."/>
            <person name="Emmerson P.T."/>
            <person name="Entian K.-D."/>
            <person name="Errington J."/>
            <person name="Fabret C."/>
            <person name="Ferrari E."/>
            <person name="Foulger D."/>
            <person name="Fritz C."/>
            <person name="Fujita M."/>
            <person name="Fujita Y."/>
            <person name="Fuma S."/>
            <person name="Galizzi A."/>
            <person name="Galleron N."/>
            <person name="Ghim S.-Y."/>
            <person name="Glaser P."/>
            <person name="Goffeau A."/>
            <person name="Golightly E.J."/>
            <person name="Grandi G."/>
            <person name="Guiseppi G."/>
            <person name="Guy B.J."/>
            <person name="Haga K."/>
            <person name="Haiech J."/>
            <person name="Harwood C.R."/>
            <person name="Henaut A."/>
            <person name="Hilbert H."/>
            <person name="Holsappel S."/>
            <person name="Hosono S."/>
            <person name="Hullo M.-F."/>
            <person name="Itaya M."/>
            <person name="Jones L.-M."/>
            <person name="Joris B."/>
            <person name="Karamata D."/>
            <person name="Kasahara Y."/>
            <person name="Klaerr-Blanchard M."/>
            <person name="Klein C."/>
            <person name="Kobayashi Y."/>
            <person name="Koetter P."/>
            <person name="Koningstein G."/>
            <person name="Krogh S."/>
            <person name="Kumano M."/>
            <person name="Kurita K."/>
            <person name="Lapidus A."/>
            <person name="Lardinois S."/>
            <person name="Lauber J."/>
            <person name="Lazarevic V."/>
            <person name="Lee S.-M."/>
            <person name="Levine A."/>
            <person name="Liu H."/>
            <person name="Masuda S."/>
            <person name="Mauel C."/>
            <person name="Medigue C."/>
            <person name="Medina N."/>
            <person name="Mellado R.P."/>
            <person name="Mizuno M."/>
            <person name="Moestl D."/>
            <person name="Nakai S."/>
            <person name="Noback M."/>
            <person name="Noone D."/>
            <person name="O'Reilly M."/>
            <person name="Ogawa K."/>
            <person name="Ogiwara A."/>
            <person name="Oudega B."/>
            <person name="Park S.-H."/>
            <person name="Parro V."/>
            <person name="Pohl T.M."/>
            <person name="Portetelle D."/>
            <person name="Porwollik S."/>
            <person name="Prescott A.M."/>
            <person name="Presecan E."/>
            <person name="Pujic P."/>
            <person name="Purnelle B."/>
            <person name="Rapoport G."/>
            <person name="Rey M."/>
            <person name="Reynolds S."/>
            <person name="Rieger M."/>
            <person name="Rivolta C."/>
            <person name="Rocha E."/>
            <person name="Roche B."/>
            <person name="Rose M."/>
            <person name="Sadaie Y."/>
            <person name="Sato T."/>
            <person name="Scanlan E."/>
            <person name="Schleich S."/>
            <person name="Schroeter R."/>
            <person name="Scoffone F."/>
            <person name="Sekiguchi J."/>
            <person name="Sekowska A."/>
            <person name="Seror S.J."/>
            <person name="Serror P."/>
            <person name="Shin B.-S."/>
            <person name="Soldo B."/>
            <person name="Sorokin A."/>
            <person name="Tacconi E."/>
            <person name="Takagi T."/>
            <person name="Takahashi H."/>
            <person name="Takemaru K."/>
            <person name="Takeuchi M."/>
            <person name="Tamakoshi A."/>
            <person name="Tanaka T."/>
            <person name="Terpstra P."/>
            <person name="Tognoni A."/>
            <person name="Tosato V."/>
            <person name="Uchiyama S."/>
            <person name="Vandenbol M."/>
            <person name="Vannier F."/>
            <person name="Vassarotti A."/>
            <person name="Viari A."/>
            <person name="Wambutt R."/>
            <person name="Wedler E."/>
            <person name="Wedler H."/>
            <person name="Weitzenegger T."/>
            <person name="Winters P."/>
            <person name="Wipat A."/>
            <person name="Yamamoto H."/>
            <person name="Yamane K."/>
            <person name="Yasumoto K."/>
            <person name="Yata K."/>
            <person name="Yoshida K."/>
            <person name="Yoshikawa H.-F."/>
            <person name="Zumstein E."/>
            <person name="Yoshikawa H."/>
            <person name="Danchin A."/>
        </authorList>
    </citation>
    <scope>NUCLEOTIDE SEQUENCE [LARGE SCALE GENOMIC DNA]</scope>
    <source>
        <strain>168</strain>
    </source>
</reference>
<proteinExistence type="predicted"/>
<protein>
    <recommendedName>
        <fullName>Uncharacterized protein YrhO</fullName>
    </recommendedName>
</protein>
<keyword id="KW-0175">Coiled coil</keyword>
<keyword id="KW-1185">Reference proteome</keyword>